<organism>
    <name type="scientific">Homo sapiens</name>
    <name type="common">Human</name>
    <dbReference type="NCBI Taxonomy" id="9606"/>
    <lineage>
        <taxon>Eukaryota</taxon>
        <taxon>Metazoa</taxon>
        <taxon>Chordata</taxon>
        <taxon>Craniata</taxon>
        <taxon>Vertebrata</taxon>
        <taxon>Euteleostomi</taxon>
        <taxon>Mammalia</taxon>
        <taxon>Eutheria</taxon>
        <taxon>Euarchontoglires</taxon>
        <taxon>Primates</taxon>
        <taxon>Haplorrhini</taxon>
        <taxon>Catarrhini</taxon>
        <taxon>Hominidae</taxon>
        <taxon>Homo</taxon>
    </lineage>
</organism>
<evidence type="ECO:0000250" key="1"/>
<evidence type="ECO:0000255" key="2">
    <source>
        <dbReference type="PROSITE-ProRule" id="PRU00336"/>
    </source>
</evidence>
<evidence type="ECO:0000256" key="3">
    <source>
        <dbReference type="SAM" id="MobiDB-lite"/>
    </source>
</evidence>
<evidence type="ECO:0000269" key="4">
    <source>
    </source>
</evidence>
<evidence type="ECO:0000269" key="5">
    <source>
    </source>
</evidence>
<evidence type="ECO:0000269" key="6">
    <source>
    </source>
</evidence>
<evidence type="ECO:0000269" key="7">
    <source>
    </source>
</evidence>
<evidence type="ECO:0000303" key="8">
    <source>
    </source>
</evidence>
<evidence type="ECO:0000303" key="9">
    <source>
    </source>
</evidence>
<evidence type="ECO:0000303" key="10">
    <source>
    </source>
</evidence>
<evidence type="ECO:0000303" key="11">
    <source>
    </source>
</evidence>
<evidence type="ECO:0000305" key="12"/>
<evidence type="ECO:0007829" key="13">
    <source>
        <dbReference type="PDB" id="2HHL"/>
    </source>
</evidence>
<name>CTDSL_HUMAN</name>
<gene>
    <name type="primary">CTDSPL</name>
    <name type="synonym">C3orf8</name>
    <name type="synonym">NIF1</name>
    <name type="synonym">NIFL</name>
    <name type="synonym">SCP3</name>
    <name type="synonym">YA22</name>
</gene>
<comment type="function">
    <text evidence="1 4">Recruited by REST to neuronal genes that contain RE-1 elements, leading to neuronal gene silencing in non-neuronal cells (By similarity). Preferentially catalyzes the dephosphorylation of 'Ser-5' within the tandem 7 residue repeats in the C-terminal domain (CTD) of the largest RNA polymerase II subunit POLR2A. Negatively regulates RNA polymerase II transcription, possibly by controlling the transition from initiation/capping to processive transcript elongation.</text>
</comment>
<comment type="catalytic activity">
    <reaction>
        <text>O-phospho-L-seryl-[protein] + H2O = L-seryl-[protein] + phosphate</text>
        <dbReference type="Rhea" id="RHEA:20629"/>
        <dbReference type="Rhea" id="RHEA-COMP:9863"/>
        <dbReference type="Rhea" id="RHEA-COMP:11604"/>
        <dbReference type="ChEBI" id="CHEBI:15377"/>
        <dbReference type="ChEBI" id="CHEBI:29999"/>
        <dbReference type="ChEBI" id="CHEBI:43474"/>
        <dbReference type="ChEBI" id="CHEBI:83421"/>
        <dbReference type="EC" id="3.1.3.16"/>
    </reaction>
</comment>
<comment type="catalytic activity">
    <reaction>
        <text>O-phospho-L-threonyl-[protein] + H2O = L-threonyl-[protein] + phosphate</text>
        <dbReference type="Rhea" id="RHEA:47004"/>
        <dbReference type="Rhea" id="RHEA-COMP:11060"/>
        <dbReference type="Rhea" id="RHEA-COMP:11605"/>
        <dbReference type="ChEBI" id="CHEBI:15377"/>
        <dbReference type="ChEBI" id="CHEBI:30013"/>
        <dbReference type="ChEBI" id="CHEBI:43474"/>
        <dbReference type="ChEBI" id="CHEBI:61977"/>
        <dbReference type="EC" id="3.1.3.16"/>
    </reaction>
</comment>
<comment type="cofactor">
    <cofactor evidence="1">
        <name>Mg(2+)</name>
        <dbReference type="ChEBI" id="CHEBI:18420"/>
    </cofactor>
    <text evidence="1">Binds 1 Mg(2+) ion per monomer.</text>
</comment>
<comment type="subunit">
    <text evidence="1 7">Interacts with REST (By similarity). Monomer.</text>
</comment>
<comment type="interaction">
    <interactant intactId="EBI-12544034">
        <id>O15194</id>
    </interactant>
    <interactant intactId="EBI-1567153">
        <id>Q15797</id>
        <label>SMAD1</label>
    </interactant>
    <organismsDiffer>false</organismsDiffer>
    <experiments>2</experiments>
</comment>
<comment type="interaction">
    <interactant intactId="EBI-12134515">
        <id>O15194-2</id>
    </interactant>
    <interactant intactId="EBI-739534">
        <id>Q99618</id>
        <label>CDCA3</label>
    </interactant>
    <organismsDiffer>false</organismsDiffer>
    <experiments>4</experiments>
</comment>
<comment type="interaction">
    <interactant intactId="EBI-12134515">
        <id>O15194-2</id>
    </interactant>
    <interactant intactId="EBI-12159027">
        <id>P02686-2</id>
        <label>MBP</label>
    </interactant>
    <organismsDiffer>false</organismsDiffer>
    <experiments>3</experiments>
</comment>
<comment type="subcellular location">
    <subcellularLocation>
        <location evidence="1">Nucleus</location>
    </subcellularLocation>
</comment>
<comment type="alternative products">
    <event type="alternative splicing"/>
    <isoform>
        <id>O15194-1</id>
        <name>1</name>
        <name>HYA22B</name>
        <sequence type="displayed"/>
    </isoform>
    <isoform>
        <id>O15194-2</id>
        <name>2</name>
        <name>HYA22A</name>
        <sequence type="described" ref="VSP_011541"/>
    </isoform>
</comment>
<comment type="tissue specificity">
    <text evidence="6">Expression is restricted to non-neuronal tissues.</text>
</comment>
<comment type="sequence caution" evidence="12">
    <conflict type="erroneous initiation">
        <sequence resource="EMBL-CDS" id="BAA21667"/>
    </conflict>
    <text>Extended N-terminus.</text>
</comment>
<reference key="1">
    <citation type="journal article" date="1997" name="DNA Res.">
        <title>Sequence analysis of a 685-kb genomic region on chromosome 3p22-p21.3 that is homozygously deleted in a lung carcinoma cell line.</title>
        <authorList>
            <person name="Ishikawa S."/>
            <person name="Kai M."/>
            <person name="Tamari M."/>
            <person name="Takei Y."/>
            <person name="Takeuchi K."/>
            <person name="Bandou H."/>
            <person name="Yamane Y."/>
            <person name="Ogawa M."/>
            <person name="Nakamura Y."/>
        </authorList>
    </citation>
    <scope>NUCLEOTIDE SEQUENCE [MRNA] (ISOFORM 2)</scope>
    <source>
        <tissue>Fetal brain</tissue>
        <tissue>Lung</tissue>
        <tissue>Pancreas</tissue>
    </source>
</reference>
<reference key="2">
    <citation type="journal article" date="2003" name="J. Biol. Chem.">
        <title>A novel RNA polymerase II C-terminal domain phosphatase that preferentially dephosphorylates serine 5.</title>
        <authorList>
            <person name="Yeo M."/>
            <person name="Lin P.S."/>
            <person name="Dahmus M.E."/>
            <person name="Gill G.N."/>
        </authorList>
    </citation>
    <scope>NUCLEOTIDE SEQUENCE [MRNA] (ISOFORM 2)</scope>
    <scope>FUNCTION</scope>
</reference>
<reference key="3">
    <citation type="journal article" date="2004" name="Proc. Natl. Acad. Sci. U.S.A.">
        <title>RBSP3 (HYA22) is a tumor suppressor gene implicated in major epithelial malignancies.</title>
        <authorList>
            <person name="Kashuba V.I."/>
            <person name="Li J."/>
            <person name="Wang F."/>
            <person name="Senchenko V.N."/>
            <person name="Protopopov A."/>
            <person name="Malyukova A."/>
            <person name="Kutsenko A.S."/>
            <person name="Kadyrova E."/>
            <person name="Zabarovska V.I."/>
            <person name="Muravenko O.V."/>
            <person name="Zelenin A.V."/>
            <person name="Kisselev L.L."/>
            <person name="Kuzmin I."/>
            <person name="Minna J.D."/>
            <person name="Winberg G."/>
            <person name="Ernberg I."/>
            <person name="Braga E."/>
            <person name="Lerman M.I."/>
            <person name="Klein G."/>
            <person name="Zabarovsky E.R."/>
        </authorList>
    </citation>
    <scope>NUCLEOTIDE SEQUENCE [MRNA] (ISOFORMS 1 AND 2)</scope>
    <scope>VARIANTS PRO-121; SER-127 AND GLY-132</scope>
    <source>
        <tissue>Lung</tissue>
    </source>
</reference>
<reference key="4">
    <citation type="journal article" date="2006" name="BMC Genomics">
        <title>NovelFam3000 -- uncharacterized human protein domains conserved across model organisms.</title>
        <authorList>
            <person name="Kemmer D."/>
            <person name="Podowski R.M."/>
            <person name="Arenillas D."/>
            <person name="Lim J."/>
            <person name="Hodges E."/>
            <person name="Roth P."/>
            <person name="Sonnhammer E.L.L."/>
            <person name="Hoeoeg C."/>
            <person name="Wasserman W.W."/>
        </authorList>
    </citation>
    <scope>NUCLEOTIDE SEQUENCE [LARGE SCALE MRNA] (ISOFORM 2)</scope>
</reference>
<reference key="5">
    <citation type="journal article" date="2005" name="Science">
        <title>Small CTD phosphatases function in silencing neuronal gene expression.</title>
        <authorList>
            <person name="Yeo M."/>
            <person name="Lee S.-K."/>
            <person name="Lee B."/>
            <person name="Ruiz E.C."/>
            <person name="Pfaff S.L."/>
            <person name="Gill G.N."/>
        </authorList>
    </citation>
    <scope>TISSUE SPECIFICITY</scope>
</reference>
<reference key="6">
    <citation type="journal article" date="2007" name="J. Struct. Funct. Genomics">
        <title>Structural genomics of protein phosphatases.</title>
        <authorList>
            <person name="Almo S.C."/>
            <person name="Bonanno J.B."/>
            <person name="Sauder J.M."/>
            <person name="Emtage S."/>
            <person name="Dilorenzo T.P."/>
            <person name="Malashkevich V."/>
            <person name="Wasserman S.R."/>
            <person name="Swaminathan S."/>
            <person name="Eswaramoorthy S."/>
            <person name="Agarwal R."/>
            <person name="Kumaran D."/>
            <person name="Madegowda M."/>
            <person name="Ragumani S."/>
            <person name="Patskovsky Y."/>
            <person name="Alvarado J."/>
            <person name="Ramagopal U.A."/>
            <person name="Faber-Barata J."/>
            <person name="Chance M.R."/>
            <person name="Sali A."/>
            <person name="Fiser A."/>
            <person name="Zhang Z.Y."/>
            <person name="Lawrence D.S."/>
            <person name="Burley S.K."/>
        </authorList>
    </citation>
    <scope>X-RAY CRYSTALLOGRAPHY (2.1 ANGSTROMS) OF 82-265</scope>
    <scope>SUBUNIT</scope>
</reference>
<keyword id="KW-0002">3D-structure</keyword>
<keyword id="KW-0025">Alternative splicing</keyword>
<keyword id="KW-0378">Hydrolase</keyword>
<keyword id="KW-0460">Magnesium</keyword>
<keyword id="KW-0479">Metal-binding</keyword>
<keyword id="KW-0539">Nucleus</keyword>
<keyword id="KW-0904">Protein phosphatase</keyword>
<keyword id="KW-1267">Proteomics identification</keyword>
<keyword id="KW-1185">Reference proteome</keyword>
<proteinExistence type="evidence at protein level"/>
<dbReference type="EC" id="3.1.3.16"/>
<dbReference type="EMBL" id="D88153">
    <property type="protein sequence ID" value="BAA21667.1"/>
    <property type="status" value="ALT_INIT"/>
    <property type="molecule type" value="mRNA"/>
</dbReference>
<dbReference type="EMBL" id="AY279532">
    <property type="protein sequence ID" value="AAP34400.1"/>
    <property type="molecule type" value="mRNA"/>
</dbReference>
<dbReference type="EMBL" id="AJ575644">
    <property type="protein sequence ID" value="CAE11804.1"/>
    <property type="molecule type" value="mRNA"/>
</dbReference>
<dbReference type="EMBL" id="AJ575645">
    <property type="protein sequence ID" value="CAE11805.1"/>
    <property type="molecule type" value="mRNA"/>
</dbReference>
<dbReference type="EMBL" id="AY364238">
    <property type="protein sequence ID" value="AAQ76797.1"/>
    <property type="molecule type" value="mRNA"/>
</dbReference>
<dbReference type="CCDS" id="CCDS33734.1">
    <molecule id="O15194-1"/>
</dbReference>
<dbReference type="CCDS" id="CCDS33735.1">
    <molecule id="O15194-2"/>
</dbReference>
<dbReference type="PIR" id="JC5707">
    <property type="entry name" value="JC5707"/>
</dbReference>
<dbReference type="RefSeq" id="NP_001008393.1">
    <molecule id="O15194-1"/>
    <property type="nucleotide sequence ID" value="NM_001008392.2"/>
</dbReference>
<dbReference type="RefSeq" id="NP_005799.2">
    <molecule id="O15194-2"/>
    <property type="nucleotide sequence ID" value="NM_005808.3"/>
</dbReference>
<dbReference type="PDB" id="2HHL">
    <property type="method" value="X-ray"/>
    <property type="resolution" value="2.10 A"/>
    <property type="chains" value="A/B/C/D=82-265"/>
</dbReference>
<dbReference type="PDBsum" id="2HHL"/>
<dbReference type="SMR" id="O15194"/>
<dbReference type="BioGRID" id="115512">
    <property type="interactions" value="102"/>
</dbReference>
<dbReference type="CORUM" id="O15194"/>
<dbReference type="DIP" id="DIP-61247N"/>
<dbReference type="FunCoup" id="O15194">
    <property type="interactions" value="301"/>
</dbReference>
<dbReference type="IntAct" id="O15194">
    <property type="interactions" value="85"/>
</dbReference>
<dbReference type="MINT" id="O15194"/>
<dbReference type="STRING" id="9606.ENSP00000273179"/>
<dbReference type="DEPOD" id="CTDSPL"/>
<dbReference type="iPTMnet" id="O15194"/>
<dbReference type="PhosphoSitePlus" id="O15194"/>
<dbReference type="SwissPalm" id="O15194"/>
<dbReference type="BioMuta" id="CTDSPL"/>
<dbReference type="jPOST" id="O15194"/>
<dbReference type="MassIVE" id="O15194"/>
<dbReference type="PaxDb" id="9606-ENSP00000273179"/>
<dbReference type="PeptideAtlas" id="O15194"/>
<dbReference type="ProteomicsDB" id="48498">
    <molecule id="O15194-1"/>
</dbReference>
<dbReference type="ProteomicsDB" id="48499">
    <molecule id="O15194-2"/>
</dbReference>
<dbReference type="Pumba" id="O15194"/>
<dbReference type="Antibodypedia" id="28378">
    <property type="antibodies" value="177 antibodies from 22 providers"/>
</dbReference>
<dbReference type="DNASU" id="10217"/>
<dbReference type="Ensembl" id="ENST00000273179.10">
    <molecule id="O15194-1"/>
    <property type="protein sequence ID" value="ENSP00000273179.5"/>
    <property type="gene ID" value="ENSG00000144677.15"/>
</dbReference>
<dbReference type="Ensembl" id="ENST00000443503.6">
    <molecule id="O15194-2"/>
    <property type="protein sequence ID" value="ENSP00000398288.2"/>
    <property type="gene ID" value="ENSG00000144677.15"/>
</dbReference>
<dbReference type="GeneID" id="10217"/>
<dbReference type="KEGG" id="hsa:10217"/>
<dbReference type="MANE-Select" id="ENST00000273179.10">
    <property type="protein sequence ID" value="ENSP00000273179.5"/>
    <property type="RefSeq nucleotide sequence ID" value="NM_001008392.2"/>
    <property type="RefSeq protein sequence ID" value="NP_001008393.1"/>
</dbReference>
<dbReference type="UCSC" id="uc003chg.4">
    <molecule id="O15194-1"/>
    <property type="organism name" value="human"/>
</dbReference>
<dbReference type="AGR" id="HGNC:16890"/>
<dbReference type="CTD" id="10217"/>
<dbReference type="DisGeNET" id="10217"/>
<dbReference type="GeneCards" id="CTDSPL"/>
<dbReference type="HGNC" id="HGNC:16890">
    <property type="gene designation" value="CTDSPL"/>
</dbReference>
<dbReference type="HPA" id="ENSG00000144677">
    <property type="expression patterns" value="Low tissue specificity"/>
</dbReference>
<dbReference type="MIM" id="608592">
    <property type="type" value="gene"/>
</dbReference>
<dbReference type="neXtProt" id="NX_O15194"/>
<dbReference type="OpenTargets" id="ENSG00000144677"/>
<dbReference type="PharmGKB" id="PA128394571"/>
<dbReference type="VEuPathDB" id="HostDB:ENSG00000144677"/>
<dbReference type="eggNOG" id="KOG1605">
    <property type="taxonomic scope" value="Eukaryota"/>
</dbReference>
<dbReference type="GeneTree" id="ENSGT01040000240451"/>
<dbReference type="HOGENOM" id="CLU_020262_4_0_1"/>
<dbReference type="InParanoid" id="O15194"/>
<dbReference type="OMA" id="SHKGNYV"/>
<dbReference type="OrthoDB" id="277011at2759"/>
<dbReference type="PAN-GO" id="O15194">
    <property type="GO annotations" value="1 GO annotation based on evolutionary models"/>
</dbReference>
<dbReference type="PhylomeDB" id="O15194"/>
<dbReference type="TreeFam" id="TF313556"/>
<dbReference type="PathwayCommons" id="O15194"/>
<dbReference type="SignaLink" id="O15194"/>
<dbReference type="SIGNOR" id="O15194"/>
<dbReference type="BioGRID-ORCS" id="10217">
    <property type="hits" value="12 hits in 1178 CRISPR screens"/>
</dbReference>
<dbReference type="ChiTaRS" id="CTDSPL">
    <property type="organism name" value="human"/>
</dbReference>
<dbReference type="EvolutionaryTrace" id="O15194"/>
<dbReference type="GeneWiki" id="CTDSPL"/>
<dbReference type="GenomeRNAi" id="10217"/>
<dbReference type="Pharos" id="O15194">
    <property type="development level" value="Tbio"/>
</dbReference>
<dbReference type="PRO" id="PR:O15194"/>
<dbReference type="Proteomes" id="UP000005640">
    <property type="component" value="Chromosome 3"/>
</dbReference>
<dbReference type="RNAct" id="O15194">
    <property type="molecule type" value="protein"/>
</dbReference>
<dbReference type="Bgee" id="ENSG00000144677">
    <property type="expression patterns" value="Expressed in metanephric glomerulus and 210 other cell types or tissues"/>
</dbReference>
<dbReference type="ExpressionAtlas" id="O15194">
    <property type="expression patterns" value="baseline and differential"/>
</dbReference>
<dbReference type="GO" id="GO:0070062">
    <property type="term" value="C:extracellular exosome"/>
    <property type="evidence" value="ECO:0007005"/>
    <property type="project" value="UniProtKB"/>
</dbReference>
<dbReference type="GO" id="GO:0005634">
    <property type="term" value="C:nucleus"/>
    <property type="evidence" value="ECO:0007669"/>
    <property type="project" value="UniProtKB-SubCell"/>
</dbReference>
<dbReference type="GO" id="GO:0046872">
    <property type="term" value="F:metal ion binding"/>
    <property type="evidence" value="ECO:0007669"/>
    <property type="project" value="UniProtKB-KW"/>
</dbReference>
<dbReference type="GO" id="GO:0008420">
    <property type="term" value="F:RNA polymerase II CTD heptapeptide repeat phosphatase activity"/>
    <property type="evidence" value="ECO:0000318"/>
    <property type="project" value="GO_Central"/>
</dbReference>
<dbReference type="GO" id="GO:2000134">
    <property type="term" value="P:negative regulation of G1/S transition of mitotic cell cycle"/>
    <property type="evidence" value="ECO:0007669"/>
    <property type="project" value="Ensembl"/>
</dbReference>
<dbReference type="CDD" id="cd07521">
    <property type="entry name" value="HAD_FCP1-like"/>
    <property type="match status" value="1"/>
</dbReference>
<dbReference type="FunFam" id="3.40.50.1000:FF:000013">
    <property type="entry name" value="Carboxy-terminal domain RNA polymerase II polypeptide A small"/>
    <property type="match status" value="1"/>
</dbReference>
<dbReference type="Gene3D" id="3.40.50.1000">
    <property type="entry name" value="HAD superfamily/HAD-like"/>
    <property type="match status" value="1"/>
</dbReference>
<dbReference type="InterPro" id="IPR011948">
    <property type="entry name" value="Dullard_phosphatase"/>
</dbReference>
<dbReference type="InterPro" id="IPR004274">
    <property type="entry name" value="FCP1_dom"/>
</dbReference>
<dbReference type="InterPro" id="IPR036412">
    <property type="entry name" value="HAD-like_sf"/>
</dbReference>
<dbReference type="InterPro" id="IPR023214">
    <property type="entry name" value="HAD_sf"/>
</dbReference>
<dbReference type="InterPro" id="IPR040078">
    <property type="entry name" value="RNA_Pol_CTD_Phosphatase"/>
</dbReference>
<dbReference type="InterPro" id="IPR050365">
    <property type="entry name" value="TIM50"/>
</dbReference>
<dbReference type="NCBIfam" id="TIGR02251">
    <property type="entry name" value="HIF-SF_euk"/>
    <property type="match status" value="1"/>
</dbReference>
<dbReference type="PANTHER" id="PTHR12210">
    <property type="entry name" value="DULLARD PROTEIN PHOSPHATASE"/>
    <property type="match status" value="1"/>
</dbReference>
<dbReference type="Pfam" id="PF03031">
    <property type="entry name" value="NIF"/>
    <property type="match status" value="1"/>
</dbReference>
<dbReference type="SFLD" id="SFLDG01124">
    <property type="entry name" value="C0.1:_RNA_Pol_CTD_Phosphatase"/>
    <property type="match status" value="1"/>
</dbReference>
<dbReference type="SFLD" id="SFLDS00003">
    <property type="entry name" value="Haloacid_Dehalogenase"/>
    <property type="match status" value="1"/>
</dbReference>
<dbReference type="SMART" id="SM00577">
    <property type="entry name" value="CPDc"/>
    <property type="match status" value="1"/>
</dbReference>
<dbReference type="SUPFAM" id="SSF56784">
    <property type="entry name" value="HAD-like"/>
    <property type="match status" value="1"/>
</dbReference>
<dbReference type="PROSITE" id="PS50969">
    <property type="entry name" value="FCP1"/>
    <property type="match status" value="1"/>
</dbReference>
<accession>O15194</accession>
<accession>Q3ZTU0</accession>
<accession>Q70KI4</accession>
<accession>Q7Z5Q2</accession>
<protein>
    <recommendedName>
        <fullName>CTD small phosphatase-like protein</fullName>
        <shortName>CTDSP-like</shortName>
        <ecNumber>3.1.3.16</ecNumber>
    </recommendedName>
    <alternativeName>
        <fullName>Carboxy-terminal domain RNA polymerase II polypeptide A small phosphatase 3</fullName>
    </alternativeName>
    <alternativeName>
        <fullName>NIF-like protein</fullName>
    </alternativeName>
    <alternativeName>
        <fullName>Nuclear LIM interactor-interacting factor 1</fullName>
        <shortName>NLI-interacting factor 1</shortName>
    </alternativeName>
    <alternativeName>
        <fullName>Protein YA22</fullName>
        <shortName>hYA22</shortName>
    </alternativeName>
    <alternativeName>
        <fullName>RBSP3</fullName>
    </alternativeName>
    <alternativeName>
        <fullName>Small C-terminal domain phosphatase 3</fullName>
        <shortName>SCP3</shortName>
        <shortName>Small CTD phosphatase 3</shortName>
    </alternativeName>
</protein>
<sequence>MDGPAIITQVTNPKEDEGRLPGAGEKASQCNVSLKKQRSRSILSSFFCCFRDYNVEAPPPSSPSVLPPLVEENGGLQKGDQRQVIPIPSPPAKYLLPEVTVLDYGKKCVVIDLDETLVHSSFKPISNADFIVPVEIDGTIHQVYVLKRPHVDEFLQRMGQLFECVLFTASLAKYADPVADLLDRWGVFRARLFRESCVFHRGNYVKDLSRLGRELSKVIIVDNSPASYIFHPENAVPVQSWFDDMTDTELLDLIPFFEGLSREDDVYSMLHRLCNR</sequence>
<feature type="chain" id="PRO_0000212569" description="CTD small phosphatase-like protein">
    <location>
        <begin position="1"/>
        <end position="276"/>
    </location>
</feature>
<feature type="domain" description="FCP1 homology" evidence="2">
    <location>
        <begin position="102"/>
        <end position="260"/>
    </location>
</feature>
<feature type="region of interest" description="Disordered" evidence="3">
    <location>
        <begin position="1"/>
        <end position="25"/>
    </location>
</feature>
<feature type="active site" description="4-aspartylphosphate intermediate" evidence="1">
    <location>
        <position position="112"/>
    </location>
</feature>
<feature type="active site" description="Proton donor" evidence="1">
    <location>
        <position position="114"/>
    </location>
</feature>
<feature type="binding site" evidence="1">
    <location>
        <position position="112"/>
    </location>
    <ligand>
        <name>Mg(2+)</name>
        <dbReference type="ChEBI" id="CHEBI:18420"/>
    </ligand>
</feature>
<feature type="binding site" evidence="1">
    <location>
        <position position="114"/>
    </location>
    <ligand>
        <name>Mg(2+)</name>
        <dbReference type="ChEBI" id="CHEBI:18420"/>
    </ligand>
</feature>
<feature type="binding site" evidence="1">
    <location>
        <position position="223"/>
    </location>
    <ligand>
        <name>Mg(2+)</name>
        <dbReference type="ChEBI" id="CHEBI:18420"/>
    </ligand>
</feature>
<feature type="site" description="Transition state stabilizer" evidence="1">
    <location>
        <position position="168"/>
    </location>
</feature>
<feature type="site" description="Transition state stabilizer" evidence="1">
    <location>
        <position position="206"/>
    </location>
</feature>
<feature type="splice variant" id="VSP_011541" description="In isoform 2." evidence="8 9 10 11">
    <location>
        <begin position="79"/>
        <end position="89"/>
    </location>
</feature>
<feature type="sequence variant" id="VAR_019683" evidence="5">
    <original>S</original>
    <variation>P</variation>
    <location>
        <position position="121"/>
    </location>
</feature>
<feature type="sequence variant" id="VAR_019684" description="In dbSNP:rs1341429725." evidence="5">
    <original>N</original>
    <variation>S</variation>
    <location>
        <position position="127"/>
    </location>
</feature>
<feature type="sequence variant" id="VAR_019685" evidence="5">
    <original>V</original>
    <variation>G</variation>
    <location>
        <position position="132"/>
    </location>
</feature>
<feature type="strand" evidence="13">
    <location>
        <begin position="93"/>
        <end position="96"/>
    </location>
</feature>
<feature type="helix" evidence="13">
    <location>
        <begin position="101"/>
        <end position="103"/>
    </location>
</feature>
<feature type="strand" evidence="13">
    <location>
        <begin position="108"/>
        <end position="111"/>
    </location>
</feature>
<feature type="turn" evidence="13">
    <location>
        <begin position="115"/>
        <end position="117"/>
    </location>
</feature>
<feature type="strand" evidence="13">
    <location>
        <begin position="118"/>
        <end position="123"/>
    </location>
</feature>
<feature type="strand" evidence="13">
    <location>
        <begin position="129"/>
        <end position="136"/>
    </location>
</feature>
<feature type="strand" evidence="13">
    <location>
        <begin position="139"/>
        <end position="147"/>
    </location>
</feature>
<feature type="helix" evidence="13">
    <location>
        <begin position="151"/>
        <end position="161"/>
    </location>
</feature>
<feature type="strand" evidence="13">
    <location>
        <begin position="162"/>
        <end position="167"/>
    </location>
</feature>
<feature type="helix" evidence="13">
    <location>
        <begin position="172"/>
        <end position="182"/>
    </location>
</feature>
<feature type="strand" evidence="13">
    <location>
        <begin position="188"/>
        <end position="192"/>
    </location>
</feature>
<feature type="helix" evidence="13">
    <location>
        <begin position="194"/>
        <end position="196"/>
    </location>
</feature>
<feature type="strand" evidence="13">
    <location>
        <begin position="198"/>
        <end position="200"/>
    </location>
</feature>
<feature type="strand" evidence="13">
    <location>
        <begin position="203"/>
        <end position="205"/>
    </location>
</feature>
<feature type="helix" evidence="13">
    <location>
        <begin position="208"/>
        <end position="210"/>
    </location>
</feature>
<feature type="strand" evidence="13">
    <location>
        <begin position="211"/>
        <end position="213"/>
    </location>
</feature>
<feature type="helix" evidence="13">
    <location>
        <begin position="215"/>
        <end position="217"/>
    </location>
</feature>
<feature type="strand" evidence="13">
    <location>
        <begin position="218"/>
        <end position="223"/>
    </location>
</feature>
<feature type="helix" evidence="13">
    <location>
        <begin position="225"/>
        <end position="228"/>
    </location>
</feature>
<feature type="helix" evidence="13">
    <location>
        <begin position="232"/>
        <end position="234"/>
    </location>
</feature>
<feature type="strand" evidence="13">
    <location>
        <begin position="235"/>
        <end position="237"/>
    </location>
</feature>
<feature type="helix" evidence="13">
    <location>
        <begin position="249"/>
        <end position="261"/>
    </location>
</feature>